<sequence length="439" mass="50188">MLNSYVVREVSNDKLKWEYEFAVDKKYFLDQLDSKLSEIAMNVKVPGFRVGKASIDLVRKEYLNEAMTSVVKKTIESTSSDFVKNSKFGEIISSNIDIVSYPSYYSDNDKEEDLVYKLSFEVMPEAPLMDIDNIVLSDIEVDIQECDVNEFIENLKKQRPDFVIVDDPEYVIQGSDKLVIDYQNKIKGKILRGGSAKDFVLVLGKGVALREFEDQLIGMKVGESKTFPLTFPNDYGMVHLAGKTTDMSVTVKSVYVMKGMRDSEAIAKDYGFKDVGHMEDFARKRIKQQFDQMVFTIVKKELFDYMDANYVIDVPECVVTQEIAKINKEIRDSGEDIQIDVEKEAIKRVKLGMLLIKMSRHNNITIKNEDVFSFIQSNYADYGVDIGNVLKMLQSNKNFANYISGKVLEEKVINYIIGLAKKDKKVMTAKDISLMFENI</sequence>
<gene>
    <name evidence="1" type="primary">tig</name>
    <name type="ordered locus">ECH_0902</name>
</gene>
<dbReference type="EC" id="5.2.1.8" evidence="1"/>
<dbReference type="EMBL" id="CP000236">
    <property type="protein sequence ID" value="ABD44540.1"/>
    <property type="molecule type" value="Genomic_DNA"/>
</dbReference>
<dbReference type="RefSeq" id="WP_011452887.1">
    <property type="nucleotide sequence ID" value="NC_007799.1"/>
</dbReference>
<dbReference type="SMR" id="Q2GFT7"/>
<dbReference type="STRING" id="205920.ECH_0902"/>
<dbReference type="KEGG" id="ech:ECH_0902"/>
<dbReference type="eggNOG" id="COG0544">
    <property type="taxonomic scope" value="Bacteria"/>
</dbReference>
<dbReference type="HOGENOM" id="CLU_033058_2_2_5"/>
<dbReference type="OrthoDB" id="9767721at2"/>
<dbReference type="Proteomes" id="UP000008320">
    <property type="component" value="Chromosome"/>
</dbReference>
<dbReference type="GO" id="GO:0005737">
    <property type="term" value="C:cytoplasm"/>
    <property type="evidence" value="ECO:0007669"/>
    <property type="project" value="UniProtKB-SubCell"/>
</dbReference>
<dbReference type="GO" id="GO:0003755">
    <property type="term" value="F:peptidyl-prolyl cis-trans isomerase activity"/>
    <property type="evidence" value="ECO:0007669"/>
    <property type="project" value="UniProtKB-UniRule"/>
</dbReference>
<dbReference type="GO" id="GO:0051301">
    <property type="term" value="P:cell division"/>
    <property type="evidence" value="ECO:0007669"/>
    <property type="project" value="UniProtKB-KW"/>
</dbReference>
<dbReference type="GO" id="GO:0006457">
    <property type="term" value="P:protein folding"/>
    <property type="evidence" value="ECO:0007669"/>
    <property type="project" value="UniProtKB-UniRule"/>
</dbReference>
<dbReference type="GO" id="GO:0015031">
    <property type="term" value="P:protein transport"/>
    <property type="evidence" value="ECO:0007669"/>
    <property type="project" value="UniProtKB-UniRule"/>
</dbReference>
<dbReference type="Gene3D" id="3.10.50.40">
    <property type="match status" value="1"/>
</dbReference>
<dbReference type="Gene3D" id="3.30.70.1050">
    <property type="entry name" value="Trigger factor ribosome-binding domain"/>
    <property type="match status" value="1"/>
</dbReference>
<dbReference type="Gene3D" id="1.10.3120.10">
    <property type="entry name" value="Trigger factor, C-terminal domain"/>
    <property type="match status" value="1"/>
</dbReference>
<dbReference type="HAMAP" id="MF_00303">
    <property type="entry name" value="Trigger_factor_Tig"/>
    <property type="match status" value="1"/>
</dbReference>
<dbReference type="InterPro" id="IPR046357">
    <property type="entry name" value="PPIase_dom_sf"/>
</dbReference>
<dbReference type="InterPro" id="IPR001179">
    <property type="entry name" value="PPIase_FKBP_dom"/>
</dbReference>
<dbReference type="InterPro" id="IPR005215">
    <property type="entry name" value="Trig_fac"/>
</dbReference>
<dbReference type="InterPro" id="IPR008880">
    <property type="entry name" value="Trigger_fac_C"/>
</dbReference>
<dbReference type="InterPro" id="IPR037041">
    <property type="entry name" value="Trigger_fac_C_sf"/>
</dbReference>
<dbReference type="InterPro" id="IPR008881">
    <property type="entry name" value="Trigger_fac_ribosome-bd_bac"/>
</dbReference>
<dbReference type="InterPro" id="IPR036611">
    <property type="entry name" value="Trigger_fac_ribosome-bd_sf"/>
</dbReference>
<dbReference type="InterPro" id="IPR027304">
    <property type="entry name" value="Trigger_fact/SurA_dom_sf"/>
</dbReference>
<dbReference type="NCBIfam" id="TIGR00115">
    <property type="entry name" value="tig"/>
    <property type="match status" value="1"/>
</dbReference>
<dbReference type="Pfam" id="PF00254">
    <property type="entry name" value="FKBP_C"/>
    <property type="match status" value="1"/>
</dbReference>
<dbReference type="Pfam" id="PF05698">
    <property type="entry name" value="Trigger_C"/>
    <property type="match status" value="1"/>
</dbReference>
<dbReference type="Pfam" id="PF05697">
    <property type="entry name" value="Trigger_N"/>
    <property type="match status" value="1"/>
</dbReference>
<dbReference type="PIRSF" id="PIRSF003095">
    <property type="entry name" value="Trigger_factor"/>
    <property type="match status" value="1"/>
</dbReference>
<dbReference type="SUPFAM" id="SSF54534">
    <property type="entry name" value="FKBP-like"/>
    <property type="match status" value="1"/>
</dbReference>
<dbReference type="SUPFAM" id="SSF109998">
    <property type="entry name" value="Triger factor/SurA peptide-binding domain-like"/>
    <property type="match status" value="1"/>
</dbReference>
<dbReference type="SUPFAM" id="SSF102735">
    <property type="entry name" value="Trigger factor ribosome-binding domain"/>
    <property type="match status" value="1"/>
</dbReference>
<dbReference type="PROSITE" id="PS50059">
    <property type="entry name" value="FKBP_PPIASE"/>
    <property type="match status" value="1"/>
</dbReference>
<comment type="function">
    <text evidence="1">Involved in protein export. Acts as a chaperone by maintaining the newly synthesized protein in an open conformation. Functions as a peptidyl-prolyl cis-trans isomerase.</text>
</comment>
<comment type="catalytic activity">
    <reaction evidence="1">
        <text>[protein]-peptidylproline (omega=180) = [protein]-peptidylproline (omega=0)</text>
        <dbReference type="Rhea" id="RHEA:16237"/>
        <dbReference type="Rhea" id="RHEA-COMP:10747"/>
        <dbReference type="Rhea" id="RHEA-COMP:10748"/>
        <dbReference type="ChEBI" id="CHEBI:83833"/>
        <dbReference type="ChEBI" id="CHEBI:83834"/>
        <dbReference type="EC" id="5.2.1.8"/>
    </reaction>
</comment>
<comment type="subcellular location">
    <subcellularLocation>
        <location>Cytoplasm</location>
    </subcellularLocation>
    <text evidence="1">About half TF is bound to the ribosome near the polypeptide exit tunnel while the other half is free in the cytoplasm.</text>
</comment>
<comment type="domain">
    <text evidence="1">Consists of 3 domains; the N-terminus binds the ribosome, the middle domain has PPIase activity, while the C-terminus has intrinsic chaperone activity on its own.</text>
</comment>
<comment type="similarity">
    <text evidence="1">Belongs to the FKBP-type PPIase family. Tig subfamily.</text>
</comment>
<organism>
    <name type="scientific">Ehrlichia chaffeensis (strain ATCC CRL-10679 / Arkansas)</name>
    <dbReference type="NCBI Taxonomy" id="205920"/>
    <lineage>
        <taxon>Bacteria</taxon>
        <taxon>Pseudomonadati</taxon>
        <taxon>Pseudomonadota</taxon>
        <taxon>Alphaproteobacteria</taxon>
        <taxon>Rickettsiales</taxon>
        <taxon>Anaplasmataceae</taxon>
        <taxon>Ehrlichia</taxon>
    </lineage>
</organism>
<feature type="chain" id="PRO_0000256557" description="Trigger factor">
    <location>
        <begin position="1"/>
        <end position="439"/>
    </location>
</feature>
<feature type="domain" description="PPIase FKBP-type" evidence="1">
    <location>
        <begin position="175"/>
        <end position="260"/>
    </location>
</feature>
<keyword id="KW-0131">Cell cycle</keyword>
<keyword id="KW-0132">Cell division</keyword>
<keyword id="KW-0143">Chaperone</keyword>
<keyword id="KW-0963">Cytoplasm</keyword>
<keyword id="KW-0413">Isomerase</keyword>
<keyword id="KW-1185">Reference proteome</keyword>
<keyword id="KW-0697">Rotamase</keyword>
<proteinExistence type="inferred from homology"/>
<name>TIG_EHRCR</name>
<protein>
    <recommendedName>
        <fullName evidence="1">Trigger factor</fullName>
        <shortName evidence="1">TF</shortName>
        <ecNumber evidence="1">5.2.1.8</ecNumber>
    </recommendedName>
    <alternativeName>
        <fullName evidence="1">PPIase</fullName>
    </alternativeName>
</protein>
<reference key="1">
    <citation type="journal article" date="2006" name="PLoS Genet.">
        <title>Comparative genomics of emerging human ehrlichiosis agents.</title>
        <authorList>
            <person name="Dunning Hotopp J.C."/>
            <person name="Lin M."/>
            <person name="Madupu R."/>
            <person name="Crabtree J."/>
            <person name="Angiuoli S.V."/>
            <person name="Eisen J.A."/>
            <person name="Seshadri R."/>
            <person name="Ren Q."/>
            <person name="Wu M."/>
            <person name="Utterback T.R."/>
            <person name="Smith S."/>
            <person name="Lewis M."/>
            <person name="Khouri H."/>
            <person name="Zhang C."/>
            <person name="Niu H."/>
            <person name="Lin Q."/>
            <person name="Ohashi N."/>
            <person name="Zhi N."/>
            <person name="Nelson W.C."/>
            <person name="Brinkac L.M."/>
            <person name="Dodson R.J."/>
            <person name="Rosovitz M.J."/>
            <person name="Sundaram J.P."/>
            <person name="Daugherty S.C."/>
            <person name="Davidsen T."/>
            <person name="Durkin A.S."/>
            <person name="Gwinn M.L."/>
            <person name="Haft D.H."/>
            <person name="Selengut J.D."/>
            <person name="Sullivan S.A."/>
            <person name="Zafar N."/>
            <person name="Zhou L."/>
            <person name="Benahmed F."/>
            <person name="Forberger H."/>
            <person name="Halpin R."/>
            <person name="Mulligan S."/>
            <person name="Robinson J."/>
            <person name="White O."/>
            <person name="Rikihisa Y."/>
            <person name="Tettelin H."/>
        </authorList>
    </citation>
    <scope>NUCLEOTIDE SEQUENCE [LARGE SCALE GENOMIC DNA]</scope>
    <source>
        <strain>ATCC CRL-10679 / Arkansas</strain>
    </source>
</reference>
<accession>Q2GFT7</accession>
<evidence type="ECO:0000255" key="1">
    <source>
        <dbReference type="HAMAP-Rule" id="MF_00303"/>
    </source>
</evidence>